<sequence>ASNVPKELVEKGQNRV</sequence>
<comment type="subcellular location">
    <subcellularLocation>
        <location>Mitochondrion matrix</location>
    </subcellularLocation>
</comment>
<organism>
    <name type="scientific">Solanum tuberosum</name>
    <name type="common">Potato</name>
    <dbReference type="NCBI Taxonomy" id="4113"/>
    <lineage>
        <taxon>Eukaryota</taxon>
        <taxon>Viridiplantae</taxon>
        <taxon>Streptophyta</taxon>
        <taxon>Embryophyta</taxon>
        <taxon>Tracheophyta</taxon>
        <taxon>Spermatophyta</taxon>
        <taxon>Magnoliopsida</taxon>
        <taxon>eudicotyledons</taxon>
        <taxon>Gunneridae</taxon>
        <taxon>Pentapetalae</taxon>
        <taxon>asterids</taxon>
        <taxon>lamiids</taxon>
        <taxon>Solanales</taxon>
        <taxon>Solanaceae</taxon>
        <taxon>Solanoideae</taxon>
        <taxon>Solaneae</taxon>
        <taxon>Solanum</taxon>
    </lineage>
</organism>
<keyword id="KW-0903">Direct protein sequencing</keyword>
<keyword id="KW-0496">Mitochondrion</keyword>
<keyword id="KW-1185">Reference proteome</keyword>
<name>MMPX_SOLTU</name>
<accession>P80501</accession>
<feature type="chain" id="PRO_0000096513" description="Unidentified mitochondrial matrix protein">
    <location>
        <begin position="1"/>
        <end position="16" status="greater than"/>
    </location>
</feature>
<feature type="non-terminal residue">
    <location>
        <position position="16"/>
    </location>
</feature>
<proteinExistence type="evidence at protein level"/>
<dbReference type="InParanoid" id="P80501"/>
<dbReference type="Proteomes" id="UP000011115">
    <property type="component" value="Unassembled WGS sequence"/>
</dbReference>
<dbReference type="GO" id="GO:0005759">
    <property type="term" value="C:mitochondrial matrix"/>
    <property type="evidence" value="ECO:0007669"/>
    <property type="project" value="UniProtKB-SubCell"/>
</dbReference>
<protein>
    <recommendedName>
        <fullName>Unidentified mitochondrial matrix protein</fullName>
    </recommendedName>
</protein>
<reference key="1">
    <citation type="journal article" date="1996" name="Plant J.">
        <title>New insights into the composition, molecular mass and stoichiometry of the protein complexes of plant mitochondria.</title>
        <authorList>
            <person name="Jansch L."/>
            <person name="Kruft V."/>
            <person name="Schmitz U.K."/>
            <person name="Braun H.P."/>
        </authorList>
    </citation>
    <scope>PROTEIN SEQUENCE</scope>
    <source>
        <tissue>Tuber</tissue>
    </source>
</reference>